<protein>
    <recommendedName>
        <fullName evidence="1">Ribose-5-phosphate isomerase A</fullName>
        <ecNumber evidence="1">5.3.1.6</ecNumber>
    </recommendedName>
    <alternativeName>
        <fullName evidence="1">Phosphoriboisomerase A</fullName>
        <shortName evidence="1">PRI</shortName>
    </alternativeName>
</protein>
<sequence length="219" mass="23288">MDQLSMKKMAAQAALQYVKPDSIIGVGSGSTVNCFIEVLGTIKETIKGAVAASKASEELLLRQGIEVFSANDVSGLDIYVDGADEINPQKMMIKGGGAALTREKIVAALAKKFICIVDSSKQVDVLGSTFALPIEVIPMARSQVARKLVALGGSPEYRENVVTDNGNVILDVYNFKIMNPIEMEKELNNVAGVVTNGIFALRSADIVIVGTPEGTKIIE</sequence>
<dbReference type="EC" id="5.3.1.6" evidence="1"/>
<dbReference type="EMBL" id="CP000436">
    <property type="protein sequence ID" value="ABI24401.1"/>
    <property type="molecule type" value="Genomic_DNA"/>
</dbReference>
<dbReference type="SMR" id="Q0I101"/>
<dbReference type="KEGG" id="hso:HS_0123"/>
<dbReference type="eggNOG" id="COG0120">
    <property type="taxonomic scope" value="Bacteria"/>
</dbReference>
<dbReference type="HOGENOM" id="CLU_056590_1_1_6"/>
<dbReference type="UniPathway" id="UPA00115">
    <property type="reaction ID" value="UER00412"/>
</dbReference>
<dbReference type="GO" id="GO:0005829">
    <property type="term" value="C:cytosol"/>
    <property type="evidence" value="ECO:0007669"/>
    <property type="project" value="TreeGrafter"/>
</dbReference>
<dbReference type="GO" id="GO:0004751">
    <property type="term" value="F:ribose-5-phosphate isomerase activity"/>
    <property type="evidence" value="ECO:0007669"/>
    <property type="project" value="UniProtKB-UniRule"/>
</dbReference>
<dbReference type="GO" id="GO:0006014">
    <property type="term" value="P:D-ribose metabolic process"/>
    <property type="evidence" value="ECO:0007669"/>
    <property type="project" value="TreeGrafter"/>
</dbReference>
<dbReference type="GO" id="GO:0009052">
    <property type="term" value="P:pentose-phosphate shunt, non-oxidative branch"/>
    <property type="evidence" value="ECO:0007669"/>
    <property type="project" value="UniProtKB-UniRule"/>
</dbReference>
<dbReference type="CDD" id="cd01398">
    <property type="entry name" value="RPI_A"/>
    <property type="match status" value="1"/>
</dbReference>
<dbReference type="FunFam" id="3.30.70.260:FF:000004">
    <property type="entry name" value="Ribose-5-phosphate isomerase A"/>
    <property type="match status" value="1"/>
</dbReference>
<dbReference type="FunFam" id="3.40.50.1360:FF:000001">
    <property type="entry name" value="Ribose-5-phosphate isomerase A"/>
    <property type="match status" value="1"/>
</dbReference>
<dbReference type="Gene3D" id="3.30.70.260">
    <property type="match status" value="1"/>
</dbReference>
<dbReference type="Gene3D" id="3.40.50.1360">
    <property type="match status" value="1"/>
</dbReference>
<dbReference type="HAMAP" id="MF_00170">
    <property type="entry name" value="Rib_5P_isom_A"/>
    <property type="match status" value="1"/>
</dbReference>
<dbReference type="InterPro" id="IPR037171">
    <property type="entry name" value="NagB/RpiA_transferase-like"/>
</dbReference>
<dbReference type="InterPro" id="IPR020672">
    <property type="entry name" value="Ribose5P_isomerase_typA_subgr"/>
</dbReference>
<dbReference type="InterPro" id="IPR004788">
    <property type="entry name" value="Ribose5P_isomerase_type_A"/>
</dbReference>
<dbReference type="NCBIfam" id="NF001924">
    <property type="entry name" value="PRK00702.1"/>
    <property type="match status" value="1"/>
</dbReference>
<dbReference type="NCBIfam" id="TIGR00021">
    <property type="entry name" value="rpiA"/>
    <property type="match status" value="1"/>
</dbReference>
<dbReference type="PANTHER" id="PTHR11934">
    <property type="entry name" value="RIBOSE-5-PHOSPHATE ISOMERASE"/>
    <property type="match status" value="1"/>
</dbReference>
<dbReference type="PANTHER" id="PTHR11934:SF0">
    <property type="entry name" value="RIBOSE-5-PHOSPHATE ISOMERASE"/>
    <property type="match status" value="1"/>
</dbReference>
<dbReference type="Pfam" id="PF06026">
    <property type="entry name" value="Rib_5-P_isom_A"/>
    <property type="match status" value="1"/>
</dbReference>
<dbReference type="SUPFAM" id="SSF75445">
    <property type="entry name" value="D-ribose-5-phosphate isomerase (RpiA), lid domain"/>
    <property type="match status" value="1"/>
</dbReference>
<dbReference type="SUPFAM" id="SSF100950">
    <property type="entry name" value="NagB/RpiA/CoA transferase-like"/>
    <property type="match status" value="1"/>
</dbReference>
<proteinExistence type="inferred from homology"/>
<keyword id="KW-0413">Isomerase</keyword>
<feature type="chain" id="PRO_1000016930" description="Ribose-5-phosphate isomerase A">
    <location>
        <begin position="1"/>
        <end position="219"/>
    </location>
</feature>
<feature type="active site" description="Proton acceptor" evidence="1">
    <location>
        <position position="103"/>
    </location>
</feature>
<feature type="binding site" evidence="1">
    <location>
        <begin position="28"/>
        <end position="31"/>
    </location>
    <ligand>
        <name>substrate</name>
    </ligand>
</feature>
<feature type="binding site" evidence="1">
    <location>
        <begin position="81"/>
        <end position="84"/>
    </location>
    <ligand>
        <name>substrate</name>
    </ligand>
</feature>
<feature type="binding site" evidence="1">
    <location>
        <begin position="94"/>
        <end position="97"/>
    </location>
    <ligand>
        <name>substrate</name>
    </ligand>
</feature>
<feature type="binding site" evidence="1">
    <location>
        <position position="121"/>
    </location>
    <ligand>
        <name>substrate</name>
    </ligand>
</feature>
<name>RPIA_HISS1</name>
<evidence type="ECO:0000255" key="1">
    <source>
        <dbReference type="HAMAP-Rule" id="MF_00170"/>
    </source>
</evidence>
<comment type="function">
    <text evidence="1">Catalyzes the reversible conversion of ribose-5-phosphate to ribulose 5-phosphate.</text>
</comment>
<comment type="catalytic activity">
    <reaction evidence="1">
        <text>aldehydo-D-ribose 5-phosphate = D-ribulose 5-phosphate</text>
        <dbReference type="Rhea" id="RHEA:14657"/>
        <dbReference type="ChEBI" id="CHEBI:58121"/>
        <dbReference type="ChEBI" id="CHEBI:58273"/>
        <dbReference type="EC" id="5.3.1.6"/>
    </reaction>
</comment>
<comment type="pathway">
    <text evidence="1">Carbohydrate degradation; pentose phosphate pathway; D-ribose 5-phosphate from D-ribulose 5-phosphate (non-oxidative stage): step 1/1.</text>
</comment>
<comment type="subunit">
    <text evidence="1">Homodimer.</text>
</comment>
<comment type="similarity">
    <text evidence="1">Belongs to the ribose 5-phosphate isomerase family.</text>
</comment>
<gene>
    <name evidence="1" type="primary">rpiA</name>
    <name type="ordered locus">HS_0123</name>
</gene>
<reference key="1">
    <citation type="journal article" date="2007" name="J. Bacteriol.">
        <title>Complete genome sequence of Haemophilus somnus (Histophilus somni) strain 129Pt and comparison to Haemophilus ducreyi 35000HP and Haemophilus influenzae Rd.</title>
        <authorList>
            <person name="Challacombe J.F."/>
            <person name="Duncan A.J."/>
            <person name="Brettin T.S."/>
            <person name="Bruce D."/>
            <person name="Chertkov O."/>
            <person name="Detter J.C."/>
            <person name="Han C.S."/>
            <person name="Misra M."/>
            <person name="Richardson P."/>
            <person name="Tapia R."/>
            <person name="Thayer N."/>
            <person name="Xie G."/>
            <person name="Inzana T.J."/>
        </authorList>
    </citation>
    <scope>NUCLEOTIDE SEQUENCE [LARGE SCALE GENOMIC DNA]</scope>
    <source>
        <strain>129Pt</strain>
    </source>
</reference>
<accession>Q0I101</accession>
<organism>
    <name type="scientific">Histophilus somni (strain 129Pt)</name>
    <name type="common">Haemophilus somnus</name>
    <dbReference type="NCBI Taxonomy" id="205914"/>
    <lineage>
        <taxon>Bacteria</taxon>
        <taxon>Pseudomonadati</taxon>
        <taxon>Pseudomonadota</taxon>
        <taxon>Gammaproteobacteria</taxon>
        <taxon>Pasteurellales</taxon>
        <taxon>Pasteurellaceae</taxon>
        <taxon>Histophilus</taxon>
    </lineage>
</organism>